<gene>
    <name evidence="2" type="primary">secY</name>
    <name type="synonym">sec61a1</name>
    <name type="ordered locus">HVO_2541</name>
</gene>
<organism>
    <name type="scientific">Haloferax volcanii (strain ATCC 29605 / DSM 3757 / JCM 8879 / NBRC 14742 / NCIMB 2012 / VKM B-1768 / DS2)</name>
    <name type="common">Halobacterium volcanii</name>
    <dbReference type="NCBI Taxonomy" id="309800"/>
    <lineage>
        <taxon>Archaea</taxon>
        <taxon>Methanobacteriati</taxon>
        <taxon>Methanobacteriota</taxon>
        <taxon>Stenosarchaea group</taxon>
        <taxon>Halobacteria</taxon>
        <taxon>Halobacteriales</taxon>
        <taxon>Haloferacaceae</taxon>
        <taxon>Haloferax</taxon>
    </lineage>
</organism>
<accession>Q977V3</accession>
<accession>D4GTX3</accession>
<accession>Q8X258</accession>
<protein>
    <recommendedName>
        <fullName evidence="2">Protein translocase subunit SecY</fullName>
    </recommendedName>
    <alternativeName>
        <fullName evidence="2">Protein transport protein SEC61 subunit alpha homolog</fullName>
    </alternativeName>
</protein>
<proteinExistence type="inferred from homology"/>
<keyword id="KW-1003">Cell membrane</keyword>
<keyword id="KW-0472">Membrane</keyword>
<keyword id="KW-0653">Protein transport</keyword>
<keyword id="KW-1185">Reference proteome</keyword>
<keyword id="KW-0811">Translocation</keyword>
<keyword id="KW-0812">Transmembrane</keyword>
<keyword id="KW-1133">Transmembrane helix</keyword>
<keyword id="KW-0813">Transport</keyword>
<reference key="1">
    <citation type="submission" date="2001-06" db="EMBL/GenBank/DDBJ databases">
        <title>The Haloferax volcanii SecY protein.</title>
        <authorList>
            <person name="Pohlschroder M."/>
        </authorList>
    </citation>
    <scope>NUCLEOTIDE SEQUENCE [GENOMIC DNA]</scope>
</reference>
<reference key="2">
    <citation type="journal article" date="2003" name="Extremophiles">
        <title>Isolation of fusion proteins containing SecY and SecE, components of the protein translocation complex from the halophilic archaeon Haloferax volcanii.</title>
        <authorList>
            <person name="Irihimovitch V."/>
            <person name="Ring G."/>
            <person name="Elkayam T."/>
            <person name="Konrad Z."/>
            <person name="Eichler J."/>
        </authorList>
    </citation>
    <scope>NUCLEOTIDE SEQUENCE [GENOMIC DNA]</scope>
    <source>
        <strain>DS2 / WR 341</strain>
    </source>
</reference>
<reference key="3">
    <citation type="journal article" date="2010" name="PLoS ONE">
        <title>The complete genome sequence of Haloferax volcanii DS2, a model archaeon.</title>
        <authorList>
            <person name="Hartman A.L."/>
            <person name="Norais C."/>
            <person name="Badger J.H."/>
            <person name="Delmas S."/>
            <person name="Haldenby S."/>
            <person name="Madupu R."/>
            <person name="Robinson J."/>
            <person name="Khouri H."/>
            <person name="Ren Q."/>
            <person name="Lowe T.M."/>
            <person name="Maupin-Furlow J."/>
            <person name="Pohlschroder M."/>
            <person name="Daniels C."/>
            <person name="Pfeiffer F."/>
            <person name="Allers T."/>
            <person name="Eisen J.A."/>
        </authorList>
    </citation>
    <scope>NUCLEOTIDE SEQUENCE [LARGE SCALE GENOMIC DNA]</scope>
    <source>
        <strain>ATCC 29605 / DSM 3757 / JCM 8879 / NBRC 14742 / NCIMB 2012 / VKM B-1768 / DS2</strain>
    </source>
</reference>
<evidence type="ECO:0000250" key="1"/>
<evidence type="ECO:0000255" key="2">
    <source>
        <dbReference type="HAMAP-Rule" id="MF_01465"/>
    </source>
</evidence>
<evidence type="ECO:0000305" key="3"/>
<feature type="chain" id="PRO_0000131763" description="Protein translocase subunit SecY">
    <location>
        <begin position="1"/>
        <end position="489"/>
    </location>
</feature>
<feature type="topological domain" description="Cytoplasmic" evidence="1">
    <location>
        <begin position="1"/>
        <end position="20"/>
    </location>
</feature>
<feature type="transmembrane region" description="Helical; Name=Helix 1" evidence="2">
    <location>
        <begin position="21"/>
        <end position="47"/>
    </location>
</feature>
<feature type="topological domain" description="Extracellular" evidence="1">
    <location>
        <begin position="48"/>
        <end position="59"/>
    </location>
</feature>
<feature type="transmembrane region" description="Discontinuously helical; Name=Helix 2" evidence="1">
    <location>
        <begin position="60"/>
        <end position="88"/>
    </location>
</feature>
<feature type="intramembrane region" description="Helical; Name=Helix 2A" evidence="1">
    <location>
        <begin position="60"/>
        <end position="67"/>
    </location>
</feature>
<feature type="intramembrane region" evidence="1">
    <location>
        <begin position="68"/>
        <end position="79"/>
    </location>
</feature>
<feature type="intramembrane region" description="Helical; Name=Helix 2B" evidence="1">
    <location>
        <begin position="80"/>
        <end position="88"/>
    </location>
</feature>
<feature type="topological domain" description="Cytoplasmic" evidence="1">
    <location>
        <begin position="89"/>
        <end position="110"/>
    </location>
</feature>
<feature type="transmembrane region" description="Helical; Name=Helix 3" evidence="2">
    <location>
        <begin position="111"/>
        <end position="135"/>
    </location>
</feature>
<feature type="topological domain" description="Extracellular" evidence="1">
    <location>
        <begin position="136"/>
        <end position="153"/>
    </location>
</feature>
<feature type="transmembrane region" description="Helical; Name=Helix 4" evidence="2">
    <location>
        <begin position="154"/>
        <end position="178"/>
    </location>
</feature>
<feature type="topological domain" description="Cytoplasmic" evidence="1">
    <location>
        <begin position="179"/>
        <end position="184"/>
    </location>
</feature>
<feature type="transmembrane region" description="Helical; Name=Helix 5" evidence="2">
    <location>
        <begin position="185"/>
        <end position="203"/>
    </location>
</feature>
<feature type="topological domain" description="Extracellular" evidence="1">
    <location>
        <begin position="204"/>
        <end position="244"/>
    </location>
</feature>
<feature type="transmembrane region" description="Helical; Name=Helix 6" evidence="2">
    <location>
        <begin position="245"/>
        <end position="266"/>
    </location>
</feature>
<feature type="topological domain" description="Cytoplasmic" evidence="1">
    <location>
        <begin position="267"/>
        <end position="291"/>
    </location>
</feature>
<feature type="transmembrane region" description="Helical; Name=Helix 7" evidence="2">
    <location>
        <begin position="292"/>
        <end position="313"/>
    </location>
</feature>
<feature type="topological domain" description="Extracellular" evidence="1">
    <location>
        <begin position="314"/>
        <end position="364"/>
    </location>
</feature>
<feature type="transmembrane region" description="Helical; Name=Helix 8" evidence="2">
    <location>
        <begin position="365"/>
        <end position="384"/>
    </location>
</feature>
<feature type="topological domain" description="Cytoplasmic" evidence="1">
    <location>
        <begin position="385"/>
        <end position="427"/>
    </location>
</feature>
<feature type="transmembrane region" description="Helical; Name=Helix 9" evidence="2">
    <location>
        <begin position="428"/>
        <end position="446"/>
    </location>
</feature>
<feature type="topological domain" description="Extracellular" evidence="1">
    <location>
        <begin position="447"/>
        <end position="450"/>
    </location>
</feature>
<feature type="transmembrane region" description="Helical; Name=Helix 10" evidence="2">
    <location>
        <begin position="451"/>
        <end position="465"/>
    </location>
</feature>
<feature type="topological domain" description="Cytoplasmic" evidence="1">
    <location>
        <begin position="466"/>
        <end position="488"/>
    </location>
</feature>
<feature type="sequence conflict" description="In Ref. 1; AAK95514." evidence="3" ref="1">
    <location>
        <position position="451"/>
    </location>
</feature>
<comment type="function">
    <text evidence="2">The central subunit of the protein translocation channel SecYEG. Consists of two halves formed by TMs 1-5 and 6-10. These two domains form a lateral gate at the front which open onto the bilayer between TMs 2 and 7, and are clamped together by SecE at the back. The channel is closed by both a pore ring composed of hydrophobic SecY resides and a short helix (helix 2A) on the extracellular side of the membrane which forms a plug. The plug probably moves laterally to allow the channel to open. The ring and the pore may move independently.</text>
</comment>
<comment type="subunit">
    <text evidence="2">Component of the Sec protein translocase complex. Heterotrimer consisting of alpha (SecY), beta (SecG) and gamma (SecE) subunits. The heterotrimers can form oligomers, although 1 heterotrimer is thought to be able to translocate proteins. Interacts with the ribosome. May interact with SecDF, and other proteins may be involved.</text>
</comment>
<comment type="subcellular location">
    <subcellularLocation>
        <location evidence="2">Cell membrane</location>
        <topology evidence="2">Multi-pass membrane protein</topology>
    </subcellularLocation>
</comment>
<comment type="similarity">
    <text evidence="2">Belongs to the SecY/SEC61-alpha family.</text>
</comment>
<name>SECY_HALVD</name>
<dbReference type="EMBL" id="AF395886">
    <property type="protein sequence ID" value="AAK95514.1"/>
    <property type="molecule type" value="Genomic_DNA"/>
</dbReference>
<dbReference type="EMBL" id="AF336343">
    <property type="protein sequence ID" value="AAL73212.1"/>
    <property type="molecule type" value="Genomic_DNA"/>
</dbReference>
<dbReference type="EMBL" id="CP001956">
    <property type="protein sequence ID" value="ADE03186.1"/>
    <property type="molecule type" value="Genomic_DNA"/>
</dbReference>
<dbReference type="RefSeq" id="WP_004042558.1">
    <property type="nucleotide sequence ID" value="NC_013967.1"/>
</dbReference>
<dbReference type="SMR" id="Q977V3"/>
<dbReference type="STRING" id="309800.HVO_2541"/>
<dbReference type="PaxDb" id="309800-C498_07995"/>
<dbReference type="EnsemblBacteria" id="ADE03186">
    <property type="protein sequence ID" value="ADE03186"/>
    <property type="gene ID" value="HVO_2541"/>
</dbReference>
<dbReference type="GeneID" id="8925650"/>
<dbReference type="KEGG" id="hvo:HVO_2541"/>
<dbReference type="eggNOG" id="arCOG04169">
    <property type="taxonomic scope" value="Archaea"/>
</dbReference>
<dbReference type="HOGENOM" id="CLU_031763_3_0_2"/>
<dbReference type="OrthoDB" id="371914at2157"/>
<dbReference type="Proteomes" id="UP000008243">
    <property type="component" value="Chromosome"/>
</dbReference>
<dbReference type="GO" id="GO:0005886">
    <property type="term" value="C:plasma membrane"/>
    <property type="evidence" value="ECO:0007669"/>
    <property type="project" value="UniProtKB-SubCell"/>
</dbReference>
<dbReference type="GO" id="GO:0065002">
    <property type="term" value="P:intracellular protein transmembrane transport"/>
    <property type="evidence" value="ECO:0007669"/>
    <property type="project" value="UniProtKB-UniRule"/>
</dbReference>
<dbReference type="GO" id="GO:0006605">
    <property type="term" value="P:protein targeting"/>
    <property type="evidence" value="ECO:0007669"/>
    <property type="project" value="UniProtKB-UniRule"/>
</dbReference>
<dbReference type="FunFam" id="1.10.3370.10:FF:000013">
    <property type="entry name" value="Protein translocase subunit SecY"/>
    <property type="match status" value="1"/>
</dbReference>
<dbReference type="Gene3D" id="1.10.3370.10">
    <property type="entry name" value="SecY subunit domain"/>
    <property type="match status" value="1"/>
</dbReference>
<dbReference type="HAMAP" id="MF_01465">
    <property type="entry name" value="SecY"/>
    <property type="match status" value="1"/>
</dbReference>
<dbReference type="InterPro" id="IPR026593">
    <property type="entry name" value="SecY"/>
</dbReference>
<dbReference type="InterPro" id="IPR002208">
    <property type="entry name" value="SecY/SEC61-alpha"/>
</dbReference>
<dbReference type="InterPro" id="IPR030659">
    <property type="entry name" value="SecY_CS"/>
</dbReference>
<dbReference type="InterPro" id="IPR023201">
    <property type="entry name" value="SecY_dom_sf"/>
</dbReference>
<dbReference type="InterPro" id="IPR019561">
    <property type="entry name" value="Translocon_Sec61/SecY_plug_dom"/>
</dbReference>
<dbReference type="NCBIfam" id="TIGR00967">
    <property type="entry name" value="3a0501s007"/>
    <property type="match status" value="1"/>
</dbReference>
<dbReference type="NCBIfam" id="NF006341">
    <property type="entry name" value="PRK08568.1-5"/>
    <property type="match status" value="1"/>
</dbReference>
<dbReference type="PANTHER" id="PTHR10906">
    <property type="entry name" value="SECY/SEC61-ALPHA FAMILY MEMBER"/>
    <property type="match status" value="1"/>
</dbReference>
<dbReference type="Pfam" id="PF10559">
    <property type="entry name" value="Plug_translocon"/>
    <property type="match status" value="1"/>
</dbReference>
<dbReference type="Pfam" id="PF00344">
    <property type="entry name" value="SecY"/>
    <property type="match status" value="1"/>
</dbReference>
<dbReference type="PIRSF" id="PIRSF004557">
    <property type="entry name" value="SecY"/>
    <property type="match status" value="1"/>
</dbReference>
<dbReference type="PRINTS" id="PR00303">
    <property type="entry name" value="SECYTRNLCASE"/>
</dbReference>
<dbReference type="SUPFAM" id="SSF103491">
    <property type="entry name" value="Preprotein translocase SecY subunit"/>
    <property type="match status" value="1"/>
</dbReference>
<dbReference type="PROSITE" id="PS00755">
    <property type="entry name" value="SECY_1"/>
    <property type="match status" value="1"/>
</dbReference>
<dbReference type="PROSITE" id="PS00756">
    <property type="entry name" value="SECY_2"/>
    <property type="match status" value="1"/>
</dbReference>
<sequence length="489" mass="52325">MGWKDAAEPVLSRMPAVARPEGHVPFRRKLGWTGGILVLYFFLTNVTLFGLDAATANDLFGQFRSILAGQQGSVLQLGIGPIVTASIVLQLLGGADLLGLDTDNNPRDQVLYQGLQKLLVGVMICLTGLPMVFAGNFLPADQAVATSLGIGTVGVKGLIFAQIAVGGVLILFMDEIVSKWGVGSGVGLFIIAGVSQQLVGGLFSWQGLGGTSGFFATWIGIITGAIELPASPTDLLSTVFLGQGQLLALITTLLIFGIVVYAESVRVEIPLSHARVKGARGRFPVKLIYASVLPMILVRALQANIQFLGRFLNSSWVGMPAWLGQYTSGQVTGGLLYYLAPIQSRSDWMWFLGLTSADPLDIAIRVLIDLIFMIVGGAVFAIFWVETTGMGPKSTAQQIQNSGMQIPGFRRNPQVIERVMERYIPQVTVIGGALVGLLAVMANMLGTIGAVSGTGLLLTVSITYKLYEEIAEEQLMEMHPMMRNMFGSE</sequence>